<protein>
    <recommendedName>
        <fullName evidence="1">Transcriptional activator VP30</fullName>
    </recommendedName>
    <alternativeName>
        <fullName evidence="1">EbolaVP30</fullName>
        <shortName evidence="1">eVP30</shortName>
    </alternativeName>
    <alternativeName>
        <fullName>Minor nucleoprotein VP30</fullName>
    </alternativeName>
</protein>
<accession>Q77DJ5</accession>
<comment type="function">
    <text evidence="1 3 4">Multifunctional protein that acts as a viral transcriptional activator. Promotes read-through of an RNA hairpin in the NP open reading frame to enhance viral transcription. Mechanistically, nonphosphorylated VP30 hexamers form a ternary complex with the viral leader RNA. Clamps the RNA template and the complex VP35-polymerase L together, thereby increasing the polymerase affinity for the RNA template to increase transcription initiation despite the presence of RNA secondary structures. Also assists stop-start transcription at gene junctions to promote transcription of downstream genes. Interaction with NP plays a critical role in transcription initiation by recognizing the RNA stem loop (By similarity). Interaction with host RBBP6 interferes with NP-VP30 interaction and inhibits viral RNA synthesis (PubMed:30550789). Also acts as a suppressor of RNA silencing by interacting with host DICER1 and TARBP2/TRBP (PubMed:21228243).</text>
</comment>
<comment type="subunit">
    <text evidence="1 3 4">Homohexamer; hexamerization is essential for RNA binding. Interacts with the nucleoprotein/NP; this interaction plays both essential and inhibitory roles in viral RNA synthesis. Interacts with VP35. Interacts with host STAU1 (By similarity). Interacts (via C-terminus) with host ubiquitin ligase RBBP6 isoform 1 (PubMed:30550789). Interacts with host DICER1; this interaction prevents TARBP2/TRBP binding to DICER1 and thus allows the virus to counteract host RNA silencing (PubMed:21228243). Interacts with host TARBP2/TRBP; this interaction, which occurs only in the presence of siRNA, prevents TARBP2 binding to DICER1 and thus allows the virus to counteract host RNA silencing (PubMed:21228243).</text>
</comment>
<comment type="interaction">
    <interactant intactId="EBI-15617769">
        <id>Q77DJ5</id>
    </interactant>
    <interactant intactId="EBI-15617769">
        <id>Q77DJ5</id>
        <label>VP30</label>
    </interactant>
    <organismsDiffer>false</organismsDiffer>
    <experiments>4</experiments>
</comment>
<comment type="subcellular location">
    <subcellularLocation>
        <location evidence="1">Virion</location>
    </subcellularLocation>
    <subcellularLocation>
        <location evidence="1">Host cytoplasm</location>
    </subcellularLocation>
    <text evidence="1">Present in viral inclusion bodies due to its interaction with NP.</text>
</comment>
<comment type="PTM">
    <text evidence="1">Phosphorylated by host. Phosphorylation negatively regulates the transcription activation. Phosphorylation and dephosphorylation take place in viral inclusion bodies and are largely influenced by the presence of NP. Dephosphorylated by host PPP2R5C; this dephosphorylation enhances viral transcription and is mediated by NP.</text>
</comment>
<comment type="similarity">
    <text evidence="5">Belongs to the filoviridae transcriptional activator VP30 family.</text>
</comment>
<name>VP30_EBOZ5</name>
<keyword id="KW-0002">3D-structure</keyword>
<keyword id="KW-0010">Activator</keyword>
<keyword id="KW-1035">Host cytoplasm</keyword>
<keyword id="KW-0945">Host-virus interaction</keyword>
<keyword id="KW-1090">Inhibition of host innate immune response by virus</keyword>
<keyword id="KW-0479">Metal-binding</keyword>
<keyword id="KW-0597">Phosphoprotein</keyword>
<keyword id="KW-0694">RNA-binding</keyword>
<keyword id="KW-0941">Suppressor of RNA silencing</keyword>
<keyword id="KW-0804">Transcription</keyword>
<keyword id="KW-0899">Viral immunoevasion</keyword>
<keyword id="KW-0543">Viral nucleoprotein</keyword>
<keyword id="KW-0946">Virion</keyword>
<keyword id="KW-0862">Zinc</keyword>
<keyword id="KW-0863">Zinc-finger</keyword>
<organismHost>
    <name type="scientific">Epomops franqueti</name>
    <name type="common">Franquet's epauletted fruit bat</name>
    <name type="synonym">Epomophorus franqueti</name>
    <dbReference type="NCBI Taxonomy" id="77231"/>
</organismHost>
<organismHost>
    <name type="scientific">Homo sapiens</name>
    <name type="common">Human</name>
    <dbReference type="NCBI Taxonomy" id="9606"/>
</organismHost>
<organismHost>
    <name type="scientific">Myonycteris torquata</name>
    <name type="common">Little collared fruit bat</name>
    <dbReference type="NCBI Taxonomy" id="77243"/>
</organismHost>
<gene>
    <name type="primary">VP30</name>
</gene>
<dbReference type="EMBL" id="AY354458">
    <property type="protein sequence ID" value="AAQ55051.1"/>
    <property type="molecule type" value="Genomic_RNA"/>
</dbReference>
<dbReference type="RefSeq" id="NP_066249.1">
    <property type="nucleotide sequence ID" value="NC_002549.1"/>
</dbReference>
<dbReference type="PDB" id="2I8B">
    <property type="method" value="X-ray"/>
    <property type="resolution" value="2.00 A"/>
    <property type="chains" value="A/B=142-272"/>
</dbReference>
<dbReference type="PDB" id="5VAO">
    <property type="method" value="X-ray"/>
    <property type="resolution" value="2.56 A"/>
    <property type="chains" value="A/B/C/D=139-267"/>
</dbReference>
<dbReference type="PDB" id="5VAP">
    <property type="method" value="X-ray"/>
    <property type="resolution" value="1.85 A"/>
    <property type="chains" value="A/B=142-253"/>
</dbReference>
<dbReference type="PDB" id="6E5X">
    <property type="method" value="X-ray"/>
    <property type="resolution" value="1.50 A"/>
    <property type="chains" value="A=140-266"/>
</dbReference>
<dbReference type="PDBsum" id="2I8B"/>
<dbReference type="PDBsum" id="5VAO"/>
<dbReference type="PDBsum" id="5VAP"/>
<dbReference type="PDBsum" id="6E5X"/>
<dbReference type="SMR" id="Q77DJ5"/>
<dbReference type="DIP" id="DIP-60797N"/>
<dbReference type="DNASU" id="911826"/>
<dbReference type="GeneID" id="911826"/>
<dbReference type="KEGG" id="vg:911826"/>
<dbReference type="EvolutionaryTrace" id="Q77DJ5"/>
<dbReference type="Proteomes" id="UP000007208">
    <property type="component" value="Genome"/>
</dbReference>
<dbReference type="GO" id="GO:0030430">
    <property type="term" value="C:host cell cytoplasm"/>
    <property type="evidence" value="ECO:0007669"/>
    <property type="project" value="UniProtKB-SubCell"/>
</dbReference>
<dbReference type="GO" id="GO:0019013">
    <property type="term" value="C:viral nucleocapsid"/>
    <property type="evidence" value="ECO:0007669"/>
    <property type="project" value="UniProtKB-KW"/>
</dbReference>
<dbReference type="GO" id="GO:0042802">
    <property type="term" value="F:identical protein binding"/>
    <property type="evidence" value="ECO:0000353"/>
    <property type="project" value="IntAct"/>
</dbReference>
<dbReference type="GO" id="GO:0003723">
    <property type="term" value="F:RNA binding"/>
    <property type="evidence" value="ECO:0007669"/>
    <property type="project" value="UniProtKB-KW"/>
</dbReference>
<dbReference type="GO" id="GO:0008270">
    <property type="term" value="F:zinc ion binding"/>
    <property type="evidence" value="ECO:0007669"/>
    <property type="project" value="UniProtKB-KW"/>
</dbReference>
<dbReference type="GO" id="GO:0052170">
    <property type="term" value="P:symbiont-mediated suppression of host innate immune response"/>
    <property type="evidence" value="ECO:0007669"/>
    <property type="project" value="UniProtKB-KW"/>
</dbReference>
<dbReference type="FunFam" id="1.20.120.1160:FF:000002">
    <property type="entry name" value="Minor nucleoprotein VP30"/>
    <property type="match status" value="1"/>
</dbReference>
<dbReference type="Gene3D" id="1.20.120.1160">
    <property type="match status" value="1"/>
</dbReference>
<dbReference type="InterPro" id="IPR014459">
    <property type="entry name" value="VP30_FiloV"/>
</dbReference>
<dbReference type="Pfam" id="PF11507">
    <property type="entry name" value="Transcript_VP30"/>
    <property type="match status" value="1"/>
</dbReference>
<dbReference type="PIRSF" id="PIRSF011356">
    <property type="entry name" value="VP30_FiloV"/>
    <property type="match status" value="1"/>
</dbReference>
<feature type="chain" id="PRO_0000245074" description="Transcriptional activator VP30">
    <location>
        <begin position="1"/>
        <end position="288"/>
    </location>
</feature>
<feature type="zinc finger region" description="C3H1-type; atypical">
    <location>
        <begin position="72"/>
        <end position="90"/>
    </location>
</feature>
<feature type="region of interest" description="Disordered" evidence="2">
    <location>
        <begin position="1"/>
        <end position="49"/>
    </location>
</feature>
<feature type="region of interest" description="RNA-binding" evidence="1">
    <location>
        <begin position="26"/>
        <end position="40"/>
    </location>
</feature>
<feature type="region of interest" description="Oligomerization">
    <location>
        <begin position="94"/>
        <end position="112"/>
    </location>
</feature>
<feature type="region of interest" description="Interaction with the nucleoprotein">
    <location>
        <begin position="180"/>
        <end position="197"/>
    </location>
</feature>
<feature type="region of interest" description="Disordered" evidence="2">
    <location>
        <begin position="268"/>
        <end position="288"/>
    </location>
</feature>
<feature type="compositionally biased region" description="Basic and acidic residues" evidence="2">
    <location>
        <begin position="30"/>
        <end position="41"/>
    </location>
</feature>
<feature type="mutagenesis site" description="Complete loss of binding to host RBBP6 and to NP." evidence="4">
    <original>E</original>
    <variation>A</variation>
    <location>
        <position position="197"/>
    </location>
</feature>
<feature type="mutagenesis site" description="No effect on binding to host RBBP6 and to NP." evidence="4">
    <original>D</original>
    <variation>A</variation>
    <location>
        <position position="202"/>
    </location>
</feature>
<feature type="mutagenesis site" description="No effect on binding to host RBBP6 and to NP." evidence="4">
    <original>Q</original>
    <variation>A</variation>
    <location>
        <position position="229"/>
    </location>
</feature>
<feature type="mutagenesis site" description="Complete loss of binding to host RBBP6 and to NP." evidence="4">
    <original>W</original>
    <variation>A</variation>
    <location>
        <position position="230"/>
    </location>
</feature>
<feature type="helix" evidence="8">
    <location>
        <begin position="144"/>
        <end position="155"/>
    </location>
</feature>
<feature type="helix" evidence="8">
    <location>
        <begin position="159"/>
        <end position="161"/>
    </location>
</feature>
<feature type="helix" evidence="8">
    <location>
        <begin position="164"/>
        <end position="178"/>
    </location>
</feature>
<feature type="helix" evidence="8">
    <location>
        <begin position="183"/>
        <end position="185"/>
    </location>
</feature>
<feature type="helix" evidence="8">
    <location>
        <begin position="186"/>
        <end position="196"/>
    </location>
</feature>
<feature type="helix" evidence="8">
    <location>
        <begin position="201"/>
        <end position="203"/>
    </location>
</feature>
<feature type="helix" evidence="8">
    <location>
        <begin position="204"/>
        <end position="215"/>
    </location>
</feature>
<feature type="strand" evidence="7">
    <location>
        <begin position="218"/>
        <end position="220"/>
    </location>
</feature>
<feature type="helix" evidence="8">
    <location>
        <begin position="221"/>
        <end position="229"/>
    </location>
</feature>
<feature type="helix" evidence="8">
    <location>
        <begin position="232"/>
        <end position="245"/>
    </location>
</feature>
<feature type="turn" evidence="8">
    <location>
        <begin position="246"/>
        <end position="248"/>
    </location>
</feature>
<feature type="strand" evidence="7">
    <location>
        <begin position="250"/>
        <end position="252"/>
    </location>
</feature>
<feature type="helix" evidence="8">
    <location>
        <begin position="255"/>
        <end position="262"/>
    </location>
</feature>
<organism>
    <name type="scientific">Zaire ebolavirus (strain Kikwit-95)</name>
    <name type="common">ZEBOV</name>
    <name type="synonym">Zaire Ebola virus</name>
    <dbReference type="NCBI Taxonomy" id="128951"/>
    <lineage>
        <taxon>Viruses</taxon>
        <taxon>Riboviria</taxon>
        <taxon>Orthornavirae</taxon>
        <taxon>Negarnaviricota</taxon>
        <taxon>Haploviricotina</taxon>
        <taxon>Monjiviricetes</taxon>
        <taxon>Mononegavirales</taxon>
        <taxon>Filoviridae</taxon>
        <taxon>Orthoebolavirus</taxon>
        <taxon>Orthoebolavirus zairense</taxon>
        <taxon>Zaire ebolavirus</taxon>
    </lineage>
</organism>
<sequence length="288" mass="32521">MEASYERGRPRAARQHSRDGHDHHVRARSSSRENYRGEYRQSRSASQVRVPTVFHKKRVEPLTVPPAPKDICPTLKKGFLCDSSFCKKDHQLESLTDRELLLLIARKTCGSVEQQLNITAPKDSRLANPTADDFQQEEGPKITLLTLIKTAEHWARQDIRTIEDSKLRALLTLCAVMTRKFSKSQLSLLCETHLRREGLGQDQAEPVLEVYQRLHSDKGGSFEAALWQQWDRQSLIMFITAFLNIALQLPCESSAVVVSGLRTLVPQSDNEEASTNPGTCSWSDEGTP</sequence>
<proteinExistence type="evidence at protein level"/>
<evidence type="ECO:0000250" key="1">
    <source>
        <dbReference type="UniProtKB" id="Q05323"/>
    </source>
</evidence>
<evidence type="ECO:0000256" key="2">
    <source>
        <dbReference type="SAM" id="MobiDB-lite"/>
    </source>
</evidence>
<evidence type="ECO:0000269" key="3">
    <source>
    </source>
</evidence>
<evidence type="ECO:0000269" key="4">
    <source>
    </source>
</evidence>
<evidence type="ECO:0000305" key="5"/>
<evidence type="ECO:0007744" key="6">
    <source>
        <dbReference type="PDB" id="6E5X"/>
    </source>
</evidence>
<evidence type="ECO:0007829" key="7">
    <source>
        <dbReference type="PDB" id="2I8B"/>
    </source>
</evidence>
<evidence type="ECO:0007829" key="8">
    <source>
        <dbReference type="PDB" id="6E5X"/>
    </source>
</evidence>
<reference key="1">
    <citation type="submission" date="2003-07" db="EMBL/GenBank/DDBJ databases">
        <authorList>
            <person name="Chain P.S.G."/>
            <person name="Ichou M.A."/>
            <person name="Malfatti S.A."/>
            <person name="Hajjaj A."/>
            <person name="Vergez L.M."/>
            <person name="Paragas J."/>
            <person name="Do L.H."/>
            <person name="Jahrling P.B."/>
            <person name="Smith K.L."/>
            <person name="McCready P.M."/>
            <person name="Ibrahim M.S."/>
        </authorList>
    </citation>
    <scope>NUCLEOTIDE SEQUENCE [GENOMIC RNA]</scope>
</reference>
<reference key="2">
    <citation type="journal article" date="2011" name="J. Virol.">
        <title>Ebolavirus proteins suppress the effects of small interfering RNA by direct interaction with the mammalian RNA interference pathway.</title>
        <authorList>
            <person name="Fabozzi G."/>
            <person name="Nabel C.S."/>
            <person name="Dolan M.A."/>
            <person name="Sullivan N.J."/>
        </authorList>
    </citation>
    <scope>FUNCTION</scope>
    <scope>INTERACTION WITH HOST DICER1</scope>
    <scope>INTERACTION WITH HOST TARBP2</scope>
</reference>
<reference key="3">
    <citation type="journal article" date="2007" name="Proc. Natl. Acad. Sci. U.S.A.">
        <title>Crystal structure of the C-terminal domain of Ebola virus VP30 reveals a role in transcription and nucleocapsid association.</title>
        <authorList>
            <person name="Hartlieb B."/>
            <person name="Muziol T."/>
            <person name="Weissenhorn W."/>
            <person name="Becker S."/>
        </authorList>
    </citation>
    <scope>X-RAY CRYSTALLOGRAPHY (2.0 ANGSTROMS) OF 142-272</scope>
</reference>
<reference evidence="6" key="4">
    <citation type="journal article" date="2018" name="Cell">
        <title>Protein Interaction Mapping Identifies RBBP6 as a Negative Regulator of Ebola Virus Replication.</title>
        <authorList>
            <person name="Batra J."/>
            <person name="Hultquist J.F."/>
            <person name="Liu D."/>
            <person name="Shtanko O."/>
            <person name="Von Dollen J."/>
            <person name="Satkamp L."/>
            <person name="Jang G.M."/>
            <person name="Luthra P."/>
            <person name="Schwarz T.M."/>
            <person name="Small G.I."/>
            <person name="Arnett E."/>
            <person name="Anantpadma M."/>
            <person name="Reyes A."/>
            <person name="Leung D.W."/>
            <person name="Kaake R."/>
            <person name="Haas P."/>
            <person name="Schmidt C.B."/>
            <person name="Schlesinger L.S."/>
            <person name="LaCount D.J."/>
            <person name="Davey R.A."/>
            <person name="Amarasinghe G.K."/>
            <person name="Basler C.F."/>
            <person name="Krogan N.J."/>
        </authorList>
    </citation>
    <scope>X-RAY CRYSTALLOGRAPHY (1.50 ANGSTROMS) OF 140-266</scope>
    <scope>INTERACTION WITH HOST RBBP6 ISOFORM 1</scope>
    <scope>MUTAGENESIS OF GLU-197; ASP-202; GLN-229 AND TRP-230</scope>
</reference>